<dbReference type="EC" id="2.5.1.75" evidence="1"/>
<dbReference type="EMBL" id="AP009324">
    <property type="protein sequence ID" value="BAF78176.1"/>
    <property type="molecule type" value="Genomic_DNA"/>
</dbReference>
<dbReference type="RefSeq" id="WP_001548613.1">
    <property type="nucleotide sequence ID" value="NZ_CTYB01000004.1"/>
</dbReference>
<dbReference type="SMR" id="A7X1U8"/>
<dbReference type="KEGG" id="saw:SAHV_1293"/>
<dbReference type="HOGENOM" id="CLU_032616_0_1_9"/>
<dbReference type="GO" id="GO:0005524">
    <property type="term" value="F:ATP binding"/>
    <property type="evidence" value="ECO:0007669"/>
    <property type="project" value="UniProtKB-UniRule"/>
</dbReference>
<dbReference type="GO" id="GO:0052381">
    <property type="term" value="F:tRNA dimethylallyltransferase activity"/>
    <property type="evidence" value="ECO:0007669"/>
    <property type="project" value="UniProtKB-UniRule"/>
</dbReference>
<dbReference type="GO" id="GO:0006400">
    <property type="term" value="P:tRNA modification"/>
    <property type="evidence" value="ECO:0007669"/>
    <property type="project" value="TreeGrafter"/>
</dbReference>
<dbReference type="FunFam" id="1.10.20.140:FF:000004">
    <property type="entry name" value="tRNA dimethylallyltransferase"/>
    <property type="match status" value="1"/>
</dbReference>
<dbReference type="Gene3D" id="1.10.20.140">
    <property type="match status" value="1"/>
</dbReference>
<dbReference type="Gene3D" id="3.40.50.300">
    <property type="entry name" value="P-loop containing nucleotide triphosphate hydrolases"/>
    <property type="match status" value="1"/>
</dbReference>
<dbReference type="HAMAP" id="MF_00185">
    <property type="entry name" value="IPP_trans"/>
    <property type="match status" value="1"/>
</dbReference>
<dbReference type="InterPro" id="IPR039657">
    <property type="entry name" value="Dimethylallyltransferase"/>
</dbReference>
<dbReference type="InterPro" id="IPR018022">
    <property type="entry name" value="IPT"/>
</dbReference>
<dbReference type="InterPro" id="IPR027417">
    <property type="entry name" value="P-loop_NTPase"/>
</dbReference>
<dbReference type="NCBIfam" id="TIGR00174">
    <property type="entry name" value="miaA"/>
    <property type="match status" value="1"/>
</dbReference>
<dbReference type="PANTHER" id="PTHR11088">
    <property type="entry name" value="TRNA DIMETHYLALLYLTRANSFERASE"/>
    <property type="match status" value="1"/>
</dbReference>
<dbReference type="PANTHER" id="PTHR11088:SF60">
    <property type="entry name" value="TRNA DIMETHYLALLYLTRANSFERASE"/>
    <property type="match status" value="1"/>
</dbReference>
<dbReference type="Pfam" id="PF01715">
    <property type="entry name" value="IPPT"/>
    <property type="match status" value="1"/>
</dbReference>
<dbReference type="SUPFAM" id="SSF52540">
    <property type="entry name" value="P-loop containing nucleoside triphosphate hydrolases"/>
    <property type="match status" value="2"/>
</dbReference>
<comment type="function">
    <text evidence="1">Catalyzes the transfer of a dimethylallyl group onto the adenine at position 37 in tRNAs that read codons beginning with uridine, leading to the formation of N6-(dimethylallyl)adenosine (i(6)A).</text>
</comment>
<comment type="catalytic activity">
    <reaction evidence="1">
        <text>adenosine(37) in tRNA + dimethylallyl diphosphate = N(6)-dimethylallyladenosine(37) in tRNA + diphosphate</text>
        <dbReference type="Rhea" id="RHEA:26482"/>
        <dbReference type="Rhea" id="RHEA-COMP:10162"/>
        <dbReference type="Rhea" id="RHEA-COMP:10375"/>
        <dbReference type="ChEBI" id="CHEBI:33019"/>
        <dbReference type="ChEBI" id="CHEBI:57623"/>
        <dbReference type="ChEBI" id="CHEBI:74411"/>
        <dbReference type="ChEBI" id="CHEBI:74415"/>
        <dbReference type="EC" id="2.5.1.75"/>
    </reaction>
</comment>
<comment type="cofactor">
    <cofactor evidence="1">
        <name>Mg(2+)</name>
        <dbReference type="ChEBI" id="CHEBI:18420"/>
    </cofactor>
</comment>
<comment type="subunit">
    <text evidence="1">Monomer.</text>
</comment>
<comment type="similarity">
    <text evidence="1">Belongs to the IPP transferase family.</text>
</comment>
<name>MIAA_STAA1</name>
<evidence type="ECO:0000255" key="1">
    <source>
        <dbReference type="HAMAP-Rule" id="MF_00185"/>
    </source>
</evidence>
<feature type="chain" id="PRO_1000020662" description="tRNA dimethylallyltransferase">
    <location>
        <begin position="1"/>
        <end position="311"/>
    </location>
</feature>
<feature type="region of interest" description="Interaction with substrate tRNA" evidence="1">
    <location>
        <begin position="38"/>
        <end position="41"/>
    </location>
</feature>
<feature type="region of interest" description="Interaction with substrate tRNA" evidence="1">
    <location>
        <begin position="166"/>
        <end position="170"/>
    </location>
</feature>
<feature type="binding site" evidence="1">
    <location>
        <begin position="13"/>
        <end position="20"/>
    </location>
    <ligand>
        <name>ATP</name>
        <dbReference type="ChEBI" id="CHEBI:30616"/>
    </ligand>
</feature>
<feature type="binding site" evidence="1">
    <location>
        <begin position="15"/>
        <end position="20"/>
    </location>
    <ligand>
        <name>substrate</name>
    </ligand>
</feature>
<feature type="site" description="Interaction with substrate tRNA" evidence="1">
    <location>
        <position position="104"/>
    </location>
</feature>
<gene>
    <name evidence="1" type="primary">miaA</name>
    <name type="ordered locus">SAHV_1293</name>
</gene>
<proteinExistence type="inferred from homology"/>
<keyword id="KW-0067">ATP-binding</keyword>
<keyword id="KW-0460">Magnesium</keyword>
<keyword id="KW-0547">Nucleotide-binding</keyword>
<keyword id="KW-0808">Transferase</keyword>
<keyword id="KW-0819">tRNA processing</keyword>
<reference key="1">
    <citation type="journal article" date="2008" name="Antimicrob. Agents Chemother.">
        <title>Mutated response regulator graR is responsible for phenotypic conversion of Staphylococcus aureus from heterogeneous vancomycin-intermediate resistance to vancomycin-intermediate resistance.</title>
        <authorList>
            <person name="Neoh H.-M."/>
            <person name="Cui L."/>
            <person name="Yuzawa H."/>
            <person name="Takeuchi F."/>
            <person name="Matsuo M."/>
            <person name="Hiramatsu K."/>
        </authorList>
    </citation>
    <scope>NUCLEOTIDE SEQUENCE [LARGE SCALE GENOMIC DNA]</scope>
    <source>
        <strain>Mu3 / ATCC 700698</strain>
    </source>
</reference>
<protein>
    <recommendedName>
        <fullName evidence="1">tRNA dimethylallyltransferase</fullName>
        <ecNumber evidence="1">2.5.1.75</ecNumber>
    </recommendedName>
    <alternativeName>
        <fullName evidence="1">Dimethylallyl diphosphate:tRNA dimethylallyltransferase</fullName>
        <shortName evidence="1">DMAPP:tRNA dimethylallyltransferase</shortName>
        <shortName evidence="1">DMATase</shortName>
    </alternativeName>
    <alternativeName>
        <fullName evidence="1">Isopentenyl-diphosphate:tRNA isopentenyltransferase</fullName>
        <shortName evidence="1">IPP transferase</shortName>
        <shortName evidence="1">IPPT</shortName>
        <shortName evidence="1">IPTase</shortName>
    </alternativeName>
</protein>
<sequence>MNKNKPFIVVIVGPTASGKTELSIELAKRINGEIISGDSMQVYKHMNIGTAKVTPEEMDGIPHHLIDILNPDDTFSAYEFKRLAEDLITDITNRGKVPIIAGGTGLYIQSLIYNYELEDETVTPAQLSIVKQKLSALEHLDNQQLHDYLAQFDAVSAENIHPNNRQRVLRAIEYYLKTKKLLSNRKKVQQFTENYDTLLLGIEMSRKTLYSRINKRVDIMLDHGLFREVQQLVEQGYESCQSMQAIGYKELIPVINGQMIYEDAVNDLKQHSRQYAKRQMTWFKNKMSVHWLDKENMSLQMMLDEITTQIK</sequence>
<accession>A7X1U8</accession>
<organism>
    <name type="scientific">Staphylococcus aureus (strain Mu3 / ATCC 700698)</name>
    <dbReference type="NCBI Taxonomy" id="418127"/>
    <lineage>
        <taxon>Bacteria</taxon>
        <taxon>Bacillati</taxon>
        <taxon>Bacillota</taxon>
        <taxon>Bacilli</taxon>
        <taxon>Bacillales</taxon>
        <taxon>Staphylococcaceae</taxon>
        <taxon>Staphylococcus</taxon>
    </lineage>
</organism>